<reference key="1">
    <citation type="journal article" date="2010" name="Genome Biol. Evol.">
        <title>Continuing evolution of Burkholderia mallei through genome reduction and large-scale rearrangements.</title>
        <authorList>
            <person name="Losada L."/>
            <person name="Ronning C.M."/>
            <person name="DeShazer D."/>
            <person name="Woods D."/>
            <person name="Fedorova N."/>
            <person name="Kim H.S."/>
            <person name="Shabalina S.A."/>
            <person name="Pearson T.R."/>
            <person name="Brinkac L."/>
            <person name="Tan P."/>
            <person name="Nandi T."/>
            <person name="Crabtree J."/>
            <person name="Badger J."/>
            <person name="Beckstrom-Sternberg S."/>
            <person name="Saqib M."/>
            <person name="Schutzer S.E."/>
            <person name="Keim P."/>
            <person name="Nierman W.C."/>
        </authorList>
    </citation>
    <scope>NUCLEOTIDE SEQUENCE [LARGE SCALE GENOMIC DNA]</scope>
    <source>
        <strain>1106a</strain>
    </source>
</reference>
<comment type="function">
    <text evidence="1">Required for maturation of 30S ribosomal subunits.</text>
</comment>
<comment type="subcellular location">
    <subcellularLocation>
        <location evidence="1">Cytoplasm</location>
    </subcellularLocation>
</comment>
<comment type="similarity">
    <text evidence="1">Belongs to the RimP family.</text>
</comment>
<organism>
    <name type="scientific">Burkholderia pseudomallei (strain 1106a)</name>
    <dbReference type="NCBI Taxonomy" id="357348"/>
    <lineage>
        <taxon>Bacteria</taxon>
        <taxon>Pseudomonadati</taxon>
        <taxon>Pseudomonadota</taxon>
        <taxon>Betaproteobacteria</taxon>
        <taxon>Burkholderiales</taxon>
        <taxon>Burkholderiaceae</taxon>
        <taxon>Burkholderia</taxon>
        <taxon>pseudomallei group</taxon>
    </lineage>
</organism>
<gene>
    <name evidence="1" type="primary">rimP</name>
    <name type="ordered locus">BURPS1106A_1760</name>
</gene>
<name>RIMP_BURP0</name>
<keyword id="KW-0963">Cytoplasm</keyword>
<keyword id="KW-0690">Ribosome biogenesis</keyword>
<dbReference type="EMBL" id="CP000572">
    <property type="protein sequence ID" value="ABN89504.1"/>
    <property type="molecule type" value="Genomic_DNA"/>
</dbReference>
<dbReference type="RefSeq" id="WP_004193908.1">
    <property type="nucleotide sequence ID" value="NC_009076.1"/>
</dbReference>
<dbReference type="SMR" id="A3NUK8"/>
<dbReference type="GeneID" id="93060071"/>
<dbReference type="KEGG" id="bpl:BURPS1106A_1760"/>
<dbReference type="HOGENOM" id="CLU_070525_1_0_4"/>
<dbReference type="Proteomes" id="UP000006738">
    <property type="component" value="Chromosome I"/>
</dbReference>
<dbReference type="GO" id="GO:0005829">
    <property type="term" value="C:cytosol"/>
    <property type="evidence" value="ECO:0007669"/>
    <property type="project" value="TreeGrafter"/>
</dbReference>
<dbReference type="GO" id="GO:0000028">
    <property type="term" value="P:ribosomal small subunit assembly"/>
    <property type="evidence" value="ECO:0007669"/>
    <property type="project" value="TreeGrafter"/>
</dbReference>
<dbReference type="GO" id="GO:0006412">
    <property type="term" value="P:translation"/>
    <property type="evidence" value="ECO:0007669"/>
    <property type="project" value="TreeGrafter"/>
</dbReference>
<dbReference type="CDD" id="cd01734">
    <property type="entry name" value="YlxS_C"/>
    <property type="match status" value="1"/>
</dbReference>
<dbReference type="Gene3D" id="2.30.30.180">
    <property type="entry name" value="Ribosome maturation factor RimP, C-terminal domain"/>
    <property type="match status" value="1"/>
</dbReference>
<dbReference type="Gene3D" id="3.30.300.70">
    <property type="entry name" value="RimP-like superfamily, N-terminal"/>
    <property type="match status" value="1"/>
</dbReference>
<dbReference type="HAMAP" id="MF_01077">
    <property type="entry name" value="RimP"/>
    <property type="match status" value="1"/>
</dbReference>
<dbReference type="InterPro" id="IPR003728">
    <property type="entry name" value="Ribosome_maturation_RimP"/>
</dbReference>
<dbReference type="InterPro" id="IPR028998">
    <property type="entry name" value="RimP_C"/>
</dbReference>
<dbReference type="InterPro" id="IPR036847">
    <property type="entry name" value="RimP_C_sf"/>
</dbReference>
<dbReference type="InterPro" id="IPR028989">
    <property type="entry name" value="RimP_N"/>
</dbReference>
<dbReference type="InterPro" id="IPR035956">
    <property type="entry name" value="RimP_N_sf"/>
</dbReference>
<dbReference type="NCBIfam" id="NF000929">
    <property type="entry name" value="PRK00092.2-1"/>
    <property type="match status" value="1"/>
</dbReference>
<dbReference type="PANTHER" id="PTHR33867">
    <property type="entry name" value="RIBOSOME MATURATION FACTOR RIMP"/>
    <property type="match status" value="1"/>
</dbReference>
<dbReference type="PANTHER" id="PTHR33867:SF1">
    <property type="entry name" value="RIBOSOME MATURATION FACTOR RIMP"/>
    <property type="match status" value="1"/>
</dbReference>
<dbReference type="Pfam" id="PF17384">
    <property type="entry name" value="DUF150_C"/>
    <property type="match status" value="1"/>
</dbReference>
<dbReference type="Pfam" id="PF02576">
    <property type="entry name" value="RimP_N"/>
    <property type="match status" value="1"/>
</dbReference>
<dbReference type="SUPFAM" id="SSF74942">
    <property type="entry name" value="YhbC-like, C-terminal domain"/>
    <property type="match status" value="1"/>
</dbReference>
<dbReference type="SUPFAM" id="SSF75420">
    <property type="entry name" value="YhbC-like, N-terminal domain"/>
    <property type="match status" value="1"/>
</dbReference>
<protein>
    <recommendedName>
        <fullName evidence="1">Ribosome maturation factor RimP</fullName>
    </recommendedName>
</protein>
<sequence>MQLTELIETTVTGLGYELVDLERTGRGMVCVYIDQPAGITIDDCEKVTRQLQHVLTVENIDYERLEVSSPGLDRPLKKLADFTRFAGSEAVITLKKPLDGRKTYRGILHAPNGETIGLEFERKKGEAAMLDFTLADIDKARLIPHVDFRSRKQ</sequence>
<evidence type="ECO:0000255" key="1">
    <source>
        <dbReference type="HAMAP-Rule" id="MF_01077"/>
    </source>
</evidence>
<proteinExistence type="inferred from homology"/>
<accession>A3NUK8</accession>
<feature type="chain" id="PRO_1000064694" description="Ribosome maturation factor RimP">
    <location>
        <begin position="1"/>
        <end position="153"/>
    </location>
</feature>